<organism>
    <name type="scientific">Streptococcus pyogenes serotype M4 (strain MGAS10750)</name>
    <dbReference type="NCBI Taxonomy" id="370554"/>
    <lineage>
        <taxon>Bacteria</taxon>
        <taxon>Bacillati</taxon>
        <taxon>Bacillota</taxon>
        <taxon>Bacilli</taxon>
        <taxon>Lactobacillales</taxon>
        <taxon>Streptococcaceae</taxon>
        <taxon>Streptococcus</taxon>
    </lineage>
</organism>
<name>RL331_STRPF</name>
<proteinExistence type="inferred from homology"/>
<evidence type="ECO:0000255" key="1">
    <source>
        <dbReference type="HAMAP-Rule" id="MF_00294"/>
    </source>
</evidence>
<gene>
    <name evidence="1" type="primary">rpmG1</name>
    <name type="ordered locus">MGAS10750_Spy0425</name>
</gene>
<keyword id="KW-0687">Ribonucleoprotein</keyword>
<keyword id="KW-0689">Ribosomal protein</keyword>
<comment type="similarity">
    <text evidence="1">Belongs to the bacterial ribosomal protein bL33 family.</text>
</comment>
<accession>Q1J7Y6</accession>
<reference key="1">
    <citation type="journal article" date="2006" name="Proc. Natl. Acad. Sci. U.S.A.">
        <title>Molecular genetic anatomy of inter- and intraserotype variation in the human bacterial pathogen group A Streptococcus.</title>
        <authorList>
            <person name="Beres S.B."/>
            <person name="Richter E.W."/>
            <person name="Nagiec M.J."/>
            <person name="Sumby P."/>
            <person name="Porcella S.F."/>
            <person name="DeLeo F.R."/>
            <person name="Musser J.M."/>
        </authorList>
    </citation>
    <scope>NUCLEOTIDE SEQUENCE [LARGE SCALE GENOMIC DNA]</scope>
    <source>
        <strain>MGAS10750</strain>
    </source>
</reference>
<feature type="chain" id="PRO_0000356732" description="Large ribosomal subunit protein bL33A">
    <location>
        <begin position="1"/>
        <end position="48"/>
    </location>
</feature>
<dbReference type="EMBL" id="CP000262">
    <property type="protein sequence ID" value="ABF37375.1"/>
    <property type="molecule type" value="Genomic_DNA"/>
</dbReference>
<dbReference type="SMR" id="Q1J7Y6"/>
<dbReference type="KEGG" id="spi:MGAS10750_Spy0425"/>
<dbReference type="HOGENOM" id="CLU_190949_0_2_9"/>
<dbReference type="Proteomes" id="UP000002434">
    <property type="component" value="Chromosome"/>
</dbReference>
<dbReference type="GO" id="GO:0005737">
    <property type="term" value="C:cytoplasm"/>
    <property type="evidence" value="ECO:0007669"/>
    <property type="project" value="UniProtKB-ARBA"/>
</dbReference>
<dbReference type="GO" id="GO:1990904">
    <property type="term" value="C:ribonucleoprotein complex"/>
    <property type="evidence" value="ECO:0007669"/>
    <property type="project" value="UniProtKB-KW"/>
</dbReference>
<dbReference type="GO" id="GO:0005840">
    <property type="term" value="C:ribosome"/>
    <property type="evidence" value="ECO:0007669"/>
    <property type="project" value="UniProtKB-KW"/>
</dbReference>
<dbReference type="GO" id="GO:0003735">
    <property type="term" value="F:structural constituent of ribosome"/>
    <property type="evidence" value="ECO:0007669"/>
    <property type="project" value="InterPro"/>
</dbReference>
<dbReference type="GO" id="GO:0006412">
    <property type="term" value="P:translation"/>
    <property type="evidence" value="ECO:0007669"/>
    <property type="project" value="UniProtKB-UniRule"/>
</dbReference>
<dbReference type="Gene3D" id="2.20.28.120">
    <property type="entry name" value="Ribosomal protein L33"/>
    <property type="match status" value="1"/>
</dbReference>
<dbReference type="HAMAP" id="MF_00294">
    <property type="entry name" value="Ribosomal_bL33"/>
    <property type="match status" value="1"/>
</dbReference>
<dbReference type="InterPro" id="IPR001705">
    <property type="entry name" value="Ribosomal_bL33"/>
</dbReference>
<dbReference type="InterPro" id="IPR038584">
    <property type="entry name" value="Ribosomal_bL33_sf"/>
</dbReference>
<dbReference type="InterPro" id="IPR011332">
    <property type="entry name" value="Ribosomal_zn-bd"/>
</dbReference>
<dbReference type="NCBIfam" id="NF001764">
    <property type="entry name" value="PRK00504.1"/>
    <property type="match status" value="1"/>
</dbReference>
<dbReference type="NCBIfam" id="NF001860">
    <property type="entry name" value="PRK00595.1"/>
    <property type="match status" value="1"/>
</dbReference>
<dbReference type="NCBIfam" id="TIGR01023">
    <property type="entry name" value="rpmG_bact"/>
    <property type="match status" value="1"/>
</dbReference>
<dbReference type="PANTHER" id="PTHR43168">
    <property type="entry name" value="50S RIBOSOMAL PROTEIN L33, CHLOROPLASTIC"/>
    <property type="match status" value="1"/>
</dbReference>
<dbReference type="PANTHER" id="PTHR43168:SF6">
    <property type="entry name" value="LARGE RIBOSOMAL SUBUNIT PROTEIN BL33A"/>
    <property type="match status" value="1"/>
</dbReference>
<dbReference type="Pfam" id="PF00471">
    <property type="entry name" value="Ribosomal_L33"/>
    <property type="match status" value="1"/>
</dbReference>
<dbReference type="SUPFAM" id="SSF57829">
    <property type="entry name" value="Zn-binding ribosomal proteins"/>
    <property type="match status" value="1"/>
</dbReference>
<protein>
    <recommendedName>
        <fullName evidence="1">Large ribosomal subunit protein bL33A</fullName>
    </recommendedName>
    <alternativeName>
        <fullName evidence="1">50S ribosomal protein L33 1</fullName>
    </alternativeName>
</protein>
<sequence length="48" mass="5548">MRVKINLECSECGSNNYLTSKNKSSHPEKIKVPKYCPKERKVTLHVET</sequence>